<protein>
    <recommendedName>
        <fullName>Glutaredoxin-C7</fullName>
    </recommendedName>
</protein>
<evidence type="ECO:0000250" key="1"/>
<evidence type="ECO:0000255" key="2">
    <source>
        <dbReference type="PROSITE-ProRule" id="PRU00686"/>
    </source>
</evidence>
<evidence type="ECO:0000256" key="3">
    <source>
        <dbReference type="SAM" id="MobiDB-lite"/>
    </source>
</evidence>
<evidence type="ECO:0000305" key="4"/>
<keyword id="KW-0963">Cytoplasm</keyword>
<keyword id="KW-1015">Disulfide bond</keyword>
<keyword id="KW-0249">Electron transport</keyword>
<keyword id="KW-0676">Redox-active center</keyword>
<keyword id="KW-1185">Reference proteome</keyword>
<keyword id="KW-0813">Transport</keyword>
<proteinExistence type="inferred from homology"/>
<dbReference type="EMBL" id="AC136519">
    <property type="protein sequence ID" value="AAV24911.1"/>
    <property type="status" value="ALT_SEQ"/>
    <property type="molecule type" value="Genomic_DNA"/>
</dbReference>
<dbReference type="EMBL" id="AP008211">
    <property type="protein sequence ID" value="BAF16788.1"/>
    <property type="molecule type" value="Genomic_DNA"/>
</dbReference>
<dbReference type="EMBL" id="AP014961">
    <property type="protein sequence ID" value="BAS92694.1"/>
    <property type="molecule type" value="Genomic_DNA"/>
</dbReference>
<dbReference type="SMR" id="Q0DK35"/>
<dbReference type="FunCoup" id="Q0DK35">
    <property type="interactions" value="37"/>
</dbReference>
<dbReference type="STRING" id="39947.Q0DK35"/>
<dbReference type="PaxDb" id="39947-Q0DK35"/>
<dbReference type="EnsemblPlants" id="Os05t0198200-00">
    <property type="protein sequence ID" value="Os05t0198200-00"/>
    <property type="gene ID" value="Os05g0198200"/>
</dbReference>
<dbReference type="Gramene" id="Os05t0198200-00">
    <property type="protein sequence ID" value="Os05t0198200-00"/>
    <property type="gene ID" value="Os05g0198200"/>
</dbReference>
<dbReference type="KEGG" id="dosa:Os05g0198200"/>
<dbReference type="eggNOG" id="KOG1752">
    <property type="taxonomic scope" value="Eukaryota"/>
</dbReference>
<dbReference type="HOGENOM" id="CLU_026126_6_3_1"/>
<dbReference type="InParanoid" id="Q0DK35"/>
<dbReference type="OMA" id="KSCCMCH"/>
<dbReference type="Proteomes" id="UP000000763">
    <property type="component" value="Chromosome 5"/>
</dbReference>
<dbReference type="Proteomes" id="UP000059680">
    <property type="component" value="Chromosome 5"/>
</dbReference>
<dbReference type="GO" id="GO:0005737">
    <property type="term" value="C:cytoplasm"/>
    <property type="evidence" value="ECO:0007669"/>
    <property type="project" value="UniProtKB-SubCell"/>
</dbReference>
<dbReference type="Gene3D" id="3.40.30.10">
    <property type="entry name" value="Glutaredoxin"/>
    <property type="match status" value="1"/>
</dbReference>
<dbReference type="InterPro" id="IPR011905">
    <property type="entry name" value="GlrX-like_pln_2"/>
</dbReference>
<dbReference type="InterPro" id="IPR002109">
    <property type="entry name" value="Glutaredoxin"/>
</dbReference>
<dbReference type="InterPro" id="IPR014025">
    <property type="entry name" value="Glutaredoxin_subgr"/>
</dbReference>
<dbReference type="InterPro" id="IPR036249">
    <property type="entry name" value="Thioredoxin-like_sf"/>
</dbReference>
<dbReference type="NCBIfam" id="TIGR02189">
    <property type="entry name" value="GlrX-like_plant"/>
    <property type="match status" value="1"/>
</dbReference>
<dbReference type="PANTHER" id="PTHR10168">
    <property type="entry name" value="GLUTAREDOXIN"/>
    <property type="match status" value="1"/>
</dbReference>
<dbReference type="Pfam" id="PF00462">
    <property type="entry name" value="Glutaredoxin"/>
    <property type="match status" value="1"/>
</dbReference>
<dbReference type="PRINTS" id="PR00160">
    <property type="entry name" value="GLUTAREDOXIN"/>
</dbReference>
<dbReference type="SUPFAM" id="SSF52833">
    <property type="entry name" value="Thioredoxin-like"/>
    <property type="match status" value="1"/>
</dbReference>
<dbReference type="PROSITE" id="PS51354">
    <property type="entry name" value="GLUTAREDOXIN_2"/>
    <property type="match status" value="1"/>
</dbReference>
<feature type="chain" id="PRO_0000269668" description="Glutaredoxin-C7">
    <location>
        <begin position="1"/>
        <end position="138"/>
    </location>
</feature>
<feature type="domain" description="Glutaredoxin" evidence="2">
    <location>
        <begin position="42"/>
        <end position="137"/>
    </location>
</feature>
<feature type="region of interest" description="Disordered" evidence="3">
    <location>
        <begin position="17"/>
        <end position="40"/>
    </location>
</feature>
<feature type="disulfide bond" description="Redox-active" evidence="1">
    <location>
        <begin position="62"/>
        <end position="65"/>
    </location>
</feature>
<sequence>MQGGGGVSCAVAGDAPSSTRGGGGGGMLGLTLFDPPGGEQPAERIGRLVRESPVVIFARRGCCMCHVMRRLLAAVGAHATVIELDEAAEEAAASAAAAAAVPALFVGGAPVGGLDGLMGLHLSGRLVPRLREVGALCG</sequence>
<reference key="1">
    <citation type="journal article" date="2005" name="Mol. Genet. Genomics">
        <title>A fine physical map of the rice chromosome 5.</title>
        <authorList>
            <person name="Cheng C.-H."/>
            <person name="Chung M.C."/>
            <person name="Liu S.-M."/>
            <person name="Chen S.-K."/>
            <person name="Kao F.Y."/>
            <person name="Lin S.-J."/>
            <person name="Hsiao S.-H."/>
            <person name="Tseng I.C."/>
            <person name="Hsing Y.-I.C."/>
            <person name="Wu H.-P."/>
            <person name="Chen C.-S."/>
            <person name="Shaw J.-F."/>
            <person name="Wu J."/>
            <person name="Matsumoto T."/>
            <person name="Sasaki T."/>
            <person name="Chen H.-C."/>
            <person name="Chow T.-Y."/>
        </authorList>
    </citation>
    <scope>NUCLEOTIDE SEQUENCE [LARGE SCALE GENOMIC DNA]</scope>
    <source>
        <strain>cv. Nipponbare</strain>
    </source>
</reference>
<reference key="2">
    <citation type="journal article" date="2005" name="Nature">
        <title>The map-based sequence of the rice genome.</title>
        <authorList>
            <consortium name="International rice genome sequencing project (IRGSP)"/>
        </authorList>
    </citation>
    <scope>NUCLEOTIDE SEQUENCE [LARGE SCALE GENOMIC DNA]</scope>
    <source>
        <strain>cv. Nipponbare</strain>
    </source>
</reference>
<reference key="3">
    <citation type="journal article" date="2008" name="Nucleic Acids Res.">
        <title>The rice annotation project database (RAP-DB): 2008 update.</title>
        <authorList>
            <consortium name="The rice annotation project (RAP)"/>
        </authorList>
    </citation>
    <scope>GENOME REANNOTATION</scope>
    <source>
        <strain>cv. Nipponbare</strain>
    </source>
</reference>
<reference key="4">
    <citation type="journal article" date="2013" name="Rice">
        <title>Improvement of the Oryza sativa Nipponbare reference genome using next generation sequence and optical map data.</title>
        <authorList>
            <person name="Kawahara Y."/>
            <person name="de la Bastide M."/>
            <person name="Hamilton J.P."/>
            <person name="Kanamori H."/>
            <person name="McCombie W.R."/>
            <person name="Ouyang S."/>
            <person name="Schwartz D.C."/>
            <person name="Tanaka T."/>
            <person name="Wu J."/>
            <person name="Zhou S."/>
            <person name="Childs K.L."/>
            <person name="Davidson R.M."/>
            <person name="Lin H."/>
            <person name="Quesada-Ocampo L."/>
            <person name="Vaillancourt B."/>
            <person name="Sakai H."/>
            <person name="Lee S.S."/>
            <person name="Kim J."/>
            <person name="Numa H."/>
            <person name="Itoh T."/>
            <person name="Buell C.R."/>
            <person name="Matsumoto T."/>
        </authorList>
    </citation>
    <scope>GENOME REANNOTATION</scope>
    <source>
        <strain>cv. Nipponbare</strain>
    </source>
</reference>
<reference key="5">
    <citation type="journal article" date="2006" name="J. Exp. Bot.">
        <title>Genome-wide analysis of plant glutaredoxin systems.</title>
        <authorList>
            <person name="Rouhier N."/>
            <person name="Couturier J."/>
            <person name="Jacquot J.-P."/>
        </authorList>
    </citation>
    <scope>GENE FAMILY</scope>
</reference>
<accession>Q0DK35</accession>
<accession>A0A0P0WIX2</accession>
<accession>Q60E48</accession>
<comment type="function">
    <text evidence="1">Has a glutathione-disulfide oxidoreductase activity in the presence of NADPH and glutathione reductase. Reduces low molecular weight disulfides and proteins (By similarity).</text>
</comment>
<comment type="subcellular location">
    <subcellularLocation>
        <location evidence="1">Cytoplasm</location>
    </subcellularLocation>
</comment>
<comment type="similarity">
    <text evidence="4">Belongs to the glutaredoxin family. CC-type subfamily.</text>
</comment>
<comment type="sequence caution" evidence="4">
    <conflict type="erroneous gene model prediction">
        <sequence resource="EMBL-CDS" id="AAV24911"/>
    </conflict>
</comment>
<name>GRXC7_ORYSJ</name>
<organism>
    <name type="scientific">Oryza sativa subsp. japonica</name>
    <name type="common">Rice</name>
    <dbReference type="NCBI Taxonomy" id="39947"/>
    <lineage>
        <taxon>Eukaryota</taxon>
        <taxon>Viridiplantae</taxon>
        <taxon>Streptophyta</taxon>
        <taxon>Embryophyta</taxon>
        <taxon>Tracheophyta</taxon>
        <taxon>Spermatophyta</taxon>
        <taxon>Magnoliopsida</taxon>
        <taxon>Liliopsida</taxon>
        <taxon>Poales</taxon>
        <taxon>Poaceae</taxon>
        <taxon>BOP clade</taxon>
        <taxon>Oryzoideae</taxon>
        <taxon>Oryzeae</taxon>
        <taxon>Oryzinae</taxon>
        <taxon>Oryza</taxon>
        <taxon>Oryza sativa</taxon>
    </lineage>
</organism>
<gene>
    <name type="primary">GRXC7</name>
    <name type="ordered locus">Os05g0198200</name>
    <name type="ordered locus">LOC_Os05g10930</name>
    <name type="ORF">OSJNBa0007C23.5</name>
</gene>